<name>ARGDC_IGNH4</name>
<protein>
    <recommendedName>
        <fullName evidence="1">Arginine decarboxylase proenzyme</fullName>
        <shortName evidence="1">ADC</shortName>
        <shortName evidence="1">ArgDC</shortName>
        <ecNumber evidence="1">4.1.1.19</ecNumber>
    </recommendedName>
    <alternativeName>
        <fullName evidence="1">Pyruvoyl-dependent arginine decarboxylase</fullName>
    </alternativeName>
    <component>
        <recommendedName>
            <fullName evidence="1">Arginine decarboxylase beta chain</fullName>
        </recommendedName>
    </component>
    <component>
        <recommendedName>
            <fullName evidence="1">Arginine decarboxylase alpha chain</fullName>
        </recommendedName>
    </component>
</protein>
<feature type="chain" id="PRO_0000364115" description="Arginine decarboxylase beta chain" evidence="1">
    <location>
        <begin position="1"/>
        <end position="79"/>
    </location>
</feature>
<feature type="chain" id="PRO_0000364116" description="Arginine decarboxylase alpha chain" evidence="1">
    <location>
        <begin position="80"/>
        <end position="144"/>
    </location>
</feature>
<feature type="active site" description="Schiff-base intermediate with substrate; via pyruvic acid" evidence="1">
    <location>
        <position position="80"/>
    </location>
</feature>
<feature type="active site" description="Proton acceptor; for processing activity" evidence="1">
    <location>
        <position position="85"/>
    </location>
</feature>
<feature type="active site" description="Proton donor; for catalytic activity" evidence="1">
    <location>
        <position position="100"/>
    </location>
</feature>
<feature type="site" description="Cleavage (non-hydrolytic); by autolysis" evidence="1">
    <location>
        <begin position="79"/>
        <end position="80"/>
    </location>
</feature>
<feature type="modified residue" description="Pyruvic acid (Ser); by autocatalysis" evidence="1">
    <location>
        <position position="80"/>
    </location>
</feature>
<dbReference type="EC" id="4.1.1.19" evidence="1"/>
<dbReference type="EMBL" id="CP000816">
    <property type="protein sequence ID" value="ABU81868.1"/>
    <property type="molecule type" value="Genomic_DNA"/>
</dbReference>
<dbReference type="RefSeq" id="WP_011998720.1">
    <property type="nucleotide sequence ID" value="NC_009776.1"/>
</dbReference>
<dbReference type="SMR" id="A8AAB6"/>
<dbReference type="STRING" id="453591.Igni_0686"/>
<dbReference type="GeneID" id="5562345"/>
<dbReference type="KEGG" id="iho:Igni_0686"/>
<dbReference type="eggNOG" id="arCOG00279">
    <property type="taxonomic scope" value="Archaea"/>
</dbReference>
<dbReference type="HOGENOM" id="CLU_125470_2_1_2"/>
<dbReference type="OrthoDB" id="114016at2157"/>
<dbReference type="PhylomeDB" id="A8AAB6"/>
<dbReference type="UniPathway" id="UPA00186">
    <property type="reaction ID" value="UER00284"/>
</dbReference>
<dbReference type="Proteomes" id="UP000000262">
    <property type="component" value="Chromosome"/>
</dbReference>
<dbReference type="GO" id="GO:0005829">
    <property type="term" value="C:cytosol"/>
    <property type="evidence" value="ECO:0007669"/>
    <property type="project" value="TreeGrafter"/>
</dbReference>
<dbReference type="GO" id="GO:0008792">
    <property type="term" value="F:arginine decarboxylase activity"/>
    <property type="evidence" value="ECO:0007669"/>
    <property type="project" value="UniProtKB-UniRule"/>
</dbReference>
<dbReference type="GO" id="GO:0006527">
    <property type="term" value="P:arginine catabolic process"/>
    <property type="evidence" value="ECO:0007669"/>
    <property type="project" value="UniProtKB-UniRule"/>
</dbReference>
<dbReference type="GO" id="GO:0006596">
    <property type="term" value="P:polyamine biosynthetic process"/>
    <property type="evidence" value="ECO:0007669"/>
    <property type="project" value="UniProtKB-UniRule"/>
</dbReference>
<dbReference type="Gene3D" id="3.60.90.10">
    <property type="entry name" value="S-adenosylmethionine decarboxylase"/>
    <property type="match status" value="1"/>
</dbReference>
<dbReference type="HAMAP" id="MF_00464">
    <property type="entry name" value="AdoMetDC_1"/>
    <property type="match status" value="1"/>
</dbReference>
<dbReference type="HAMAP" id="MF_01298">
    <property type="entry name" value="ArgDC"/>
    <property type="match status" value="1"/>
</dbReference>
<dbReference type="InterPro" id="IPR003826">
    <property type="entry name" value="AdoMetDC_fam_prok"/>
</dbReference>
<dbReference type="InterPro" id="IPR027549">
    <property type="entry name" value="ArgDC"/>
</dbReference>
<dbReference type="InterPro" id="IPR016067">
    <property type="entry name" value="S-AdoMet_deCO2ase_core"/>
</dbReference>
<dbReference type="InterPro" id="IPR017716">
    <property type="entry name" value="S-AdoMet_deCOase_pro-enz"/>
</dbReference>
<dbReference type="NCBIfam" id="TIGR03330">
    <property type="entry name" value="SAM_DCase_Bsu"/>
    <property type="match status" value="1"/>
</dbReference>
<dbReference type="PANTHER" id="PTHR33866">
    <property type="entry name" value="S-ADENOSYLMETHIONINE DECARBOXYLASE PROENZYME"/>
    <property type="match status" value="1"/>
</dbReference>
<dbReference type="PANTHER" id="PTHR33866:SF2">
    <property type="entry name" value="S-ADENOSYLMETHIONINE DECARBOXYLASE PROENZYME"/>
    <property type="match status" value="1"/>
</dbReference>
<dbReference type="Pfam" id="PF02675">
    <property type="entry name" value="AdoMet_dc"/>
    <property type="match status" value="1"/>
</dbReference>
<dbReference type="SUPFAM" id="SSF56276">
    <property type="entry name" value="S-adenosylmethionine decarboxylase"/>
    <property type="match status" value="1"/>
</dbReference>
<gene>
    <name type="ordered locus">Igni_0686</name>
</gene>
<comment type="function">
    <text evidence="1">Specifically catalyzes the decarboxylation of L-arginine to agmatine. Has no S-adenosylmethionine decarboxylase (AdoMetDC) activity.</text>
</comment>
<comment type="catalytic activity">
    <reaction evidence="1">
        <text>L-arginine + H(+) = agmatine + CO2</text>
        <dbReference type="Rhea" id="RHEA:17641"/>
        <dbReference type="ChEBI" id="CHEBI:15378"/>
        <dbReference type="ChEBI" id="CHEBI:16526"/>
        <dbReference type="ChEBI" id="CHEBI:32682"/>
        <dbReference type="ChEBI" id="CHEBI:58145"/>
        <dbReference type="EC" id="4.1.1.19"/>
    </reaction>
</comment>
<comment type="cofactor">
    <cofactor evidence="1">
        <name>pyruvate</name>
        <dbReference type="ChEBI" id="CHEBI:15361"/>
    </cofactor>
    <text evidence="1">Binds 1 pyruvoyl group covalently per subunit.</text>
</comment>
<comment type="pathway">
    <text evidence="1">Amine and polyamine biosynthesis; agmatine biosynthesis; agmatine from L-arginine: step 1/1.</text>
</comment>
<comment type="subunit">
    <text evidence="1">Heterooctamer of four alpha and four beta chains arranged as a tetramer of alpha/beta heterodimers.</text>
</comment>
<comment type="PTM">
    <text evidence="1">Is synthesized initially as an inactive proenzyme. Formation of the active enzyme involves a self-maturation process in which the active site pyruvoyl group is generated from an internal serine residue via an autocatalytic post-translational modification. Two non-identical subunits are generated from the proenzyme in this reaction, and the pyruvate is formed at the N-terminus of the alpha chain, which is derived from the carboxyl end of the proenzyme. The post-translation cleavage follows an unusual pathway, termed non-hydrolytic serinolysis, in which the side chain hydroxyl group of the serine supplies its oxygen atom to form the C-terminus of the beta chain, while the remainder of the serine residue undergoes an oxidative deamination to produce ammonia and the pyruvoyl group blocking the N-terminus of the alpha chain.</text>
</comment>
<comment type="similarity">
    <text evidence="1">Belongs to the prokaryotic AdoMetDC family. Type 1 subfamily.</text>
</comment>
<keyword id="KW-0068">Autocatalytic cleavage</keyword>
<keyword id="KW-0210">Decarboxylase</keyword>
<keyword id="KW-0456">Lyase</keyword>
<keyword id="KW-0620">Polyamine biosynthesis</keyword>
<keyword id="KW-0670">Pyruvate</keyword>
<keyword id="KW-1185">Reference proteome</keyword>
<keyword id="KW-0704">Schiff base</keyword>
<keyword id="KW-0865">Zymogen</keyword>
<accession>A8AAB6</accession>
<sequence length="144" mass="16426">MKTVELTNGSKKKVEDRIVGRHVYGNLYGVDPAKLWDEEGLKELVREAAEVANMKLVEVRSWKFTGYHGGVSVMALVLESHITIHTWPDYEYATVDVYTCGERSDPWRAFELIVERLEPEDYVVHYSDRSSPKRPLGGTAGRIQ</sequence>
<organism>
    <name type="scientific">Ignicoccus hospitalis (strain KIN4/I / DSM 18386 / JCM 14125)</name>
    <dbReference type="NCBI Taxonomy" id="453591"/>
    <lineage>
        <taxon>Archaea</taxon>
        <taxon>Thermoproteota</taxon>
        <taxon>Thermoprotei</taxon>
        <taxon>Desulfurococcales</taxon>
        <taxon>Desulfurococcaceae</taxon>
        <taxon>Ignicoccus</taxon>
    </lineage>
</organism>
<evidence type="ECO:0000255" key="1">
    <source>
        <dbReference type="HAMAP-Rule" id="MF_01298"/>
    </source>
</evidence>
<proteinExistence type="inferred from homology"/>
<reference key="1">
    <citation type="journal article" date="2008" name="Genome Biol.">
        <title>A genomic analysis of the archaeal system Ignicoccus hospitalis-Nanoarchaeum equitans.</title>
        <authorList>
            <person name="Podar M."/>
            <person name="Anderson I."/>
            <person name="Makarova K.S."/>
            <person name="Elkins J.G."/>
            <person name="Ivanova N."/>
            <person name="Wall M.A."/>
            <person name="Lykidis A."/>
            <person name="Mavromatis K."/>
            <person name="Sun H."/>
            <person name="Hudson M.E."/>
            <person name="Chen W."/>
            <person name="Deciu C."/>
            <person name="Hutchison D."/>
            <person name="Eads J.R."/>
            <person name="Anderson A."/>
            <person name="Fernandes F."/>
            <person name="Szeto E."/>
            <person name="Lapidus A."/>
            <person name="Kyrpides N.C."/>
            <person name="Saier M.H. Jr."/>
            <person name="Richardson P.M."/>
            <person name="Rachel R."/>
            <person name="Huber H."/>
            <person name="Eisen J.A."/>
            <person name="Koonin E.V."/>
            <person name="Keller M."/>
            <person name="Stetter K.O."/>
        </authorList>
    </citation>
    <scope>NUCLEOTIDE SEQUENCE [LARGE SCALE GENOMIC DNA]</scope>
    <source>
        <strain>KIN4/I / DSM 18386 / JCM 14125</strain>
    </source>
</reference>